<accession>A4WDK7</accession>
<organism>
    <name type="scientific">Enterobacter sp. (strain 638)</name>
    <dbReference type="NCBI Taxonomy" id="399742"/>
    <lineage>
        <taxon>Bacteria</taxon>
        <taxon>Pseudomonadati</taxon>
        <taxon>Pseudomonadota</taxon>
        <taxon>Gammaproteobacteria</taxon>
        <taxon>Enterobacterales</taxon>
        <taxon>Enterobacteriaceae</taxon>
        <taxon>Enterobacter</taxon>
    </lineage>
</organism>
<feature type="chain" id="PRO_0000342123" description="Nucleoside triphosphatase NudI">
    <location>
        <begin position="1"/>
        <end position="141"/>
    </location>
</feature>
<feature type="domain" description="Nudix hydrolase" evidence="1">
    <location>
        <begin position="1"/>
        <end position="141"/>
    </location>
</feature>
<feature type="short sequence motif" description="Nudix box">
    <location>
        <begin position="38"/>
        <end position="59"/>
    </location>
</feature>
<comment type="function">
    <text evidence="1">Catalyzes the hydrolysis of nucleoside triphosphates, with a preference for pyrimidine deoxynucleoside triphosphates (dUTP, dTTP and dCTP).</text>
</comment>
<comment type="catalytic activity">
    <reaction evidence="1">
        <text>a ribonucleoside 5'-triphosphate + H2O = a ribonucleoside 5'-phosphate + diphosphate + H(+)</text>
        <dbReference type="Rhea" id="RHEA:23996"/>
        <dbReference type="ChEBI" id="CHEBI:15377"/>
        <dbReference type="ChEBI" id="CHEBI:15378"/>
        <dbReference type="ChEBI" id="CHEBI:33019"/>
        <dbReference type="ChEBI" id="CHEBI:58043"/>
        <dbReference type="ChEBI" id="CHEBI:61557"/>
        <dbReference type="EC" id="3.6.1.9"/>
    </reaction>
</comment>
<comment type="catalytic activity">
    <reaction evidence="1">
        <text>a 2'-deoxyribonucleoside 5'-triphosphate + H2O = a 2'-deoxyribonucleoside 5'-phosphate + diphosphate + H(+)</text>
        <dbReference type="Rhea" id="RHEA:44644"/>
        <dbReference type="ChEBI" id="CHEBI:15377"/>
        <dbReference type="ChEBI" id="CHEBI:15378"/>
        <dbReference type="ChEBI" id="CHEBI:33019"/>
        <dbReference type="ChEBI" id="CHEBI:61560"/>
        <dbReference type="ChEBI" id="CHEBI:65317"/>
        <dbReference type="EC" id="3.6.1.9"/>
    </reaction>
</comment>
<comment type="catalytic activity">
    <reaction evidence="1">
        <text>dUTP + H2O = dUMP + diphosphate + H(+)</text>
        <dbReference type="Rhea" id="RHEA:10248"/>
        <dbReference type="ChEBI" id="CHEBI:15377"/>
        <dbReference type="ChEBI" id="CHEBI:15378"/>
        <dbReference type="ChEBI" id="CHEBI:33019"/>
        <dbReference type="ChEBI" id="CHEBI:61555"/>
        <dbReference type="ChEBI" id="CHEBI:246422"/>
        <dbReference type="EC" id="3.6.1.9"/>
    </reaction>
</comment>
<comment type="catalytic activity">
    <reaction evidence="1">
        <text>dUTP + H2O = dUMP + diphosphate + H(+)</text>
        <dbReference type="Rhea" id="RHEA:10248"/>
        <dbReference type="ChEBI" id="CHEBI:15377"/>
        <dbReference type="ChEBI" id="CHEBI:15378"/>
        <dbReference type="ChEBI" id="CHEBI:33019"/>
        <dbReference type="ChEBI" id="CHEBI:61555"/>
        <dbReference type="ChEBI" id="CHEBI:246422"/>
        <dbReference type="EC" id="3.6.1.23"/>
    </reaction>
</comment>
<comment type="catalytic activity">
    <reaction evidence="1">
        <text>dTTP + H2O = dTMP + diphosphate + H(+)</text>
        <dbReference type="Rhea" id="RHEA:28534"/>
        <dbReference type="ChEBI" id="CHEBI:15377"/>
        <dbReference type="ChEBI" id="CHEBI:15378"/>
        <dbReference type="ChEBI" id="CHEBI:33019"/>
        <dbReference type="ChEBI" id="CHEBI:37568"/>
        <dbReference type="ChEBI" id="CHEBI:63528"/>
        <dbReference type="EC" id="3.6.1.9"/>
    </reaction>
</comment>
<comment type="catalytic activity">
    <reaction evidence="1">
        <text>dCTP + H2O = dCMP + diphosphate + H(+)</text>
        <dbReference type="Rhea" id="RHEA:22636"/>
        <dbReference type="ChEBI" id="CHEBI:15377"/>
        <dbReference type="ChEBI" id="CHEBI:15378"/>
        <dbReference type="ChEBI" id="CHEBI:33019"/>
        <dbReference type="ChEBI" id="CHEBI:57566"/>
        <dbReference type="ChEBI" id="CHEBI:61481"/>
        <dbReference type="EC" id="3.6.1.9"/>
    </reaction>
</comment>
<comment type="catalytic activity">
    <reaction evidence="1">
        <text>dCTP + H2O = dCMP + diphosphate + H(+)</text>
        <dbReference type="Rhea" id="RHEA:22636"/>
        <dbReference type="ChEBI" id="CHEBI:15377"/>
        <dbReference type="ChEBI" id="CHEBI:15378"/>
        <dbReference type="ChEBI" id="CHEBI:33019"/>
        <dbReference type="ChEBI" id="CHEBI:57566"/>
        <dbReference type="ChEBI" id="CHEBI:61481"/>
        <dbReference type="EC" id="3.6.1.12"/>
    </reaction>
</comment>
<comment type="cofactor">
    <cofactor evidence="1">
        <name>Mg(2+)</name>
        <dbReference type="ChEBI" id="CHEBI:18420"/>
    </cofactor>
</comment>
<comment type="subunit">
    <text evidence="1">Monomer.</text>
</comment>
<comment type="similarity">
    <text evidence="1">Belongs to the Nudix hydrolase family. NudI subfamily.</text>
</comment>
<evidence type="ECO:0000255" key="1">
    <source>
        <dbReference type="HAMAP-Rule" id="MF_01846"/>
    </source>
</evidence>
<protein>
    <recommendedName>
        <fullName evidence="1">Nucleoside triphosphatase NudI</fullName>
        <ecNumber evidence="1">3.6.1.9</ecNumber>
    </recommendedName>
    <alternativeName>
        <fullName evidence="1">Nucleotide diphosphatase NudI</fullName>
    </alternativeName>
    <alternativeName>
        <fullName evidence="1">Pyrimidine deoxynucleoside triphosphate diphosphatase</fullName>
    </alternativeName>
    <alternativeName>
        <fullName evidence="1">dCTP diphosphatase</fullName>
        <ecNumber evidence="1">3.6.1.12</ecNumber>
    </alternativeName>
    <alternativeName>
        <fullName evidence="1">dTTP diphosphatase</fullName>
        <ecNumber evidence="1">3.6.1.-</ecNumber>
    </alternativeName>
    <alternativeName>
        <fullName evidence="1">dUTP diphosphatase</fullName>
        <ecNumber evidence="1">3.6.1.23</ecNumber>
    </alternativeName>
</protein>
<sequence length="141" mass="16188">MRQRTIVCPIIQNNGAYLLCKMASDRGVFPGQWALSGGGMEPGETMEEALRREIREELGERLEITAVKPWAFRDDIRVKTYADGTTEQIYMIYLIFDCLSANRDVTFNEEFQDIAWVTRESLNTLDLNEATRLTFTQKGLL</sequence>
<proteinExistence type="inferred from homology"/>
<gene>
    <name evidence="1" type="primary">nudI</name>
    <name type="ordered locus">Ent638_3123</name>
</gene>
<dbReference type="EC" id="3.6.1.9" evidence="1"/>
<dbReference type="EC" id="3.6.1.12" evidence="1"/>
<dbReference type="EC" id="3.6.1.-" evidence="1"/>
<dbReference type="EC" id="3.6.1.23" evidence="1"/>
<dbReference type="EMBL" id="CP000653">
    <property type="protein sequence ID" value="ABP61787.1"/>
    <property type="molecule type" value="Genomic_DNA"/>
</dbReference>
<dbReference type="RefSeq" id="WP_015960117.1">
    <property type="nucleotide sequence ID" value="NC_009436.1"/>
</dbReference>
<dbReference type="SMR" id="A4WDK7"/>
<dbReference type="STRING" id="399742.Ent638_3123"/>
<dbReference type="KEGG" id="ent:Ent638_3123"/>
<dbReference type="eggNOG" id="COG1051">
    <property type="taxonomic scope" value="Bacteria"/>
</dbReference>
<dbReference type="HOGENOM" id="CLU_037162_31_0_6"/>
<dbReference type="OrthoDB" id="289720at2"/>
<dbReference type="Proteomes" id="UP000000230">
    <property type="component" value="Chromosome"/>
</dbReference>
<dbReference type="GO" id="GO:0047840">
    <property type="term" value="F:dCTP diphosphatase activity"/>
    <property type="evidence" value="ECO:0007669"/>
    <property type="project" value="UniProtKB-EC"/>
</dbReference>
<dbReference type="GO" id="GO:0036218">
    <property type="term" value="F:dTTP diphosphatase activity"/>
    <property type="evidence" value="ECO:0007669"/>
    <property type="project" value="RHEA"/>
</dbReference>
<dbReference type="GO" id="GO:0004170">
    <property type="term" value="F:dUTP diphosphatase activity"/>
    <property type="evidence" value="ECO:0007669"/>
    <property type="project" value="UniProtKB-EC"/>
</dbReference>
<dbReference type="GO" id="GO:0000287">
    <property type="term" value="F:magnesium ion binding"/>
    <property type="evidence" value="ECO:0007669"/>
    <property type="project" value="UniProtKB-UniRule"/>
</dbReference>
<dbReference type="Gene3D" id="3.90.79.10">
    <property type="entry name" value="Nucleoside Triphosphate Pyrophosphohydrolase"/>
    <property type="match status" value="1"/>
</dbReference>
<dbReference type="HAMAP" id="MF_01846">
    <property type="entry name" value="Nudix_NudI"/>
    <property type="match status" value="1"/>
</dbReference>
<dbReference type="InterPro" id="IPR023781">
    <property type="entry name" value="Nucleoside_triphosphatase_NudI"/>
</dbReference>
<dbReference type="InterPro" id="IPR020476">
    <property type="entry name" value="Nudix_hydrolase"/>
</dbReference>
<dbReference type="InterPro" id="IPR015797">
    <property type="entry name" value="NUDIX_hydrolase-like_dom_sf"/>
</dbReference>
<dbReference type="InterPro" id="IPR020084">
    <property type="entry name" value="NUDIX_hydrolase_CS"/>
</dbReference>
<dbReference type="InterPro" id="IPR000086">
    <property type="entry name" value="NUDIX_hydrolase_dom"/>
</dbReference>
<dbReference type="NCBIfam" id="NF012016">
    <property type="entry name" value="PRK15472.1"/>
    <property type="match status" value="1"/>
</dbReference>
<dbReference type="PANTHER" id="PTHR43046">
    <property type="entry name" value="GDP-MANNOSE MANNOSYL HYDROLASE"/>
    <property type="match status" value="1"/>
</dbReference>
<dbReference type="PANTHER" id="PTHR43046:SF14">
    <property type="entry name" value="MUTT_NUDIX FAMILY PROTEIN"/>
    <property type="match status" value="1"/>
</dbReference>
<dbReference type="Pfam" id="PF00293">
    <property type="entry name" value="NUDIX"/>
    <property type="match status" value="1"/>
</dbReference>
<dbReference type="PRINTS" id="PR00502">
    <property type="entry name" value="NUDIXFAMILY"/>
</dbReference>
<dbReference type="SUPFAM" id="SSF55811">
    <property type="entry name" value="Nudix"/>
    <property type="match status" value="1"/>
</dbReference>
<dbReference type="PROSITE" id="PS51462">
    <property type="entry name" value="NUDIX"/>
    <property type="match status" value="1"/>
</dbReference>
<dbReference type="PROSITE" id="PS00893">
    <property type="entry name" value="NUDIX_BOX"/>
    <property type="match status" value="1"/>
</dbReference>
<name>NUDI_ENT38</name>
<keyword id="KW-0378">Hydrolase</keyword>
<keyword id="KW-0460">Magnesium</keyword>
<reference key="1">
    <citation type="journal article" date="2010" name="PLoS Genet.">
        <title>Genome sequence of the plant growth promoting endophytic bacterium Enterobacter sp. 638.</title>
        <authorList>
            <person name="Taghavi S."/>
            <person name="van der Lelie D."/>
            <person name="Hoffman A."/>
            <person name="Zhang Y.B."/>
            <person name="Walla M.D."/>
            <person name="Vangronsveld J."/>
            <person name="Newman L."/>
            <person name="Monchy S."/>
        </authorList>
    </citation>
    <scope>NUCLEOTIDE SEQUENCE [LARGE SCALE GENOMIC DNA]</scope>
    <source>
        <strain>638</strain>
    </source>
</reference>